<reference key="1">
    <citation type="journal article" date="2008" name="BMC Genomics">
        <title>Genome sequence and rapid evolution of the rice pathogen Xanthomonas oryzae pv. oryzae PXO99A.</title>
        <authorList>
            <person name="Salzberg S.L."/>
            <person name="Sommer D.D."/>
            <person name="Schatz M.C."/>
            <person name="Phillippy A.M."/>
            <person name="Rabinowicz P.D."/>
            <person name="Tsuge S."/>
            <person name="Furutani A."/>
            <person name="Ochiai H."/>
            <person name="Delcher A.L."/>
            <person name="Kelley D."/>
            <person name="Madupu R."/>
            <person name="Puiu D."/>
            <person name="Radune D."/>
            <person name="Shumway M."/>
            <person name="Trapnell C."/>
            <person name="Aparna G."/>
            <person name="Jha G."/>
            <person name="Pandey A."/>
            <person name="Patil P.B."/>
            <person name="Ishihara H."/>
            <person name="Meyer D.F."/>
            <person name="Szurek B."/>
            <person name="Verdier V."/>
            <person name="Koebnik R."/>
            <person name="Dow J.M."/>
            <person name="Ryan R.P."/>
            <person name="Hirata H."/>
            <person name="Tsuyumu S."/>
            <person name="Won Lee S."/>
            <person name="Seo Y.-S."/>
            <person name="Sriariyanum M."/>
            <person name="Ronald P.C."/>
            <person name="Sonti R.V."/>
            <person name="Van Sluys M.-A."/>
            <person name="Leach J.E."/>
            <person name="White F.F."/>
            <person name="Bogdanove A.J."/>
        </authorList>
    </citation>
    <scope>NUCLEOTIDE SEQUENCE [LARGE SCALE GENOMIC DNA]</scope>
    <source>
        <strain>PXO99A</strain>
    </source>
</reference>
<protein>
    <recommendedName>
        <fullName evidence="1">Ribose-5-phosphate isomerase A</fullName>
        <ecNumber evidence="1">5.3.1.6</ecNumber>
    </recommendedName>
    <alternativeName>
        <fullName evidence="1">Phosphoriboisomerase A</fullName>
        <shortName evidence="1">PRI</shortName>
    </alternativeName>
</protein>
<comment type="function">
    <text evidence="1">Catalyzes the reversible conversion of ribose-5-phosphate to ribulose 5-phosphate.</text>
</comment>
<comment type="catalytic activity">
    <reaction evidence="1">
        <text>aldehydo-D-ribose 5-phosphate = D-ribulose 5-phosphate</text>
        <dbReference type="Rhea" id="RHEA:14657"/>
        <dbReference type="ChEBI" id="CHEBI:58121"/>
        <dbReference type="ChEBI" id="CHEBI:58273"/>
        <dbReference type="EC" id="5.3.1.6"/>
    </reaction>
</comment>
<comment type="pathway">
    <text evidence="1">Carbohydrate degradation; pentose phosphate pathway; D-ribose 5-phosphate from D-ribulose 5-phosphate (non-oxidative stage): step 1/1.</text>
</comment>
<comment type="subunit">
    <text evidence="1">Homodimer.</text>
</comment>
<comment type="similarity">
    <text evidence="1">Belongs to the ribose 5-phosphate isomerase family.</text>
</comment>
<dbReference type="EC" id="5.3.1.6" evidence="1"/>
<dbReference type="EMBL" id="CP000967">
    <property type="protein sequence ID" value="ACD60675.1"/>
    <property type="molecule type" value="Genomic_DNA"/>
</dbReference>
<dbReference type="RefSeq" id="WP_011257968.1">
    <property type="nucleotide sequence ID" value="NC_010717.2"/>
</dbReference>
<dbReference type="SMR" id="B2SLM6"/>
<dbReference type="KEGG" id="xop:PXO_02384"/>
<dbReference type="eggNOG" id="COG0120">
    <property type="taxonomic scope" value="Bacteria"/>
</dbReference>
<dbReference type="HOGENOM" id="CLU_056590_1_1_6"/>
<dbReference type="UniPathway" id="UPA00115">
    <property type="reaction ID" value="UER00412"/>
</dbReference>
<dbReference type="Proteomes" id="UP000001740">
    <property type="component" value="Chromosome"/>
</dbReference>
<dbReference type="GO" id="GO:0005829">
    <property type="term" value="C:cytosol"/>
    <property type="evidence" value="ECO:0007669"/>
    <property type="project" value="TreeGrafter"/>
</dbReference>
<dbReference type="GO" id="GO:0004751">
    <property type="term" value="F:ribose-5-phosphate isomerase activity"/>
    <property type="evidence" value="ECO:0007669"/>
    <property type="project" value="UniProtKB-UniRule"/>
</dbReference>
<dbReference type="GO" id="GO:0006014">
    <property type="term" value="P:D-ribose metabolic process"/>
    <property type="evidence" value="ECO:0007669"/>
    <property type="project" value="TreeGrafter"/>
</dbReference>
<dbReference type="GO" id="GO:0009052">
    <property type="term" value="P:pentose-phosphate shunt, non-oxidative branch"/>
    <property type="evidence" value="ECO:0007669"/>
    <property type="project" value="UniProtKB-UniRule"/>
</dbReference>
<dbReference type="CDD" id="cd01398">
    <property type="entry name" value="RPI_A"/>
    <property type="match status" value="1"/>
</dbReference>
<dbReference type="FunFam" id="3.30.70.260:FF:000004">
    <property type="entry name" value="Ribose-5-phosphate isomerase A"/>
    <property type="match status" value="1"/>
</dbReference>
<dbReference type="FunFam" id="3.40.50.1360:FF:000001">
    <property type="entry name" value="Ribose-5-phosphate isomerase A"/>
    <property type="match status" value="1"/>
</dbReference>
<dbReference type="Gene3D" id="3.30.70.260">
    <property type="match status" value="1"/>
</dbReference>
<dbReference type="Gene3D" id="3.40.50.1360">
    <property type="match status" value="1"/>
</dbReference>
<dbReference type="HAMAP" id="MF_00170">
    <property type="entry name" value="Rib_5P_isom_A"/>
    <property type="match status" value="1"/>
</dbReference>
<dbReference type="InterPro" id="IPR037171">
    <property type="entry name" value="NagB/RpiA_transferase-like"/>
</dbReference>
<dbReference type="InterPro" id="IPR020672">
    <property type="entry name" value="Ribose5P_isomerase_typA_subgr"/>
</dbReference>
<dbReference type="InterPro" id="IPR004788">
    <property type="entry name" value="Ribose5P_isomerase_type_A"/>
</dbReference>
<dbReference type="NCBIfam" id="NF001924">
    <property type="entry name" value="PRK00702.1"/>
    <property type="match status" value="1"/>
</dbReference>
<dbReference type="NCBIfam" id="TIGR00021">
    <property type="entry name" value="rpiA"/>
    <property type="match status" value="1"/>
</dbReference>
<dbReference type="PANTHER" id="PTHR11934">
    <property type="entry name" value="RIBOSE-5-PHOSPHATE ISOMERASE"/>
    <property type="match status" value="1"/>
</dbReference>
<dbReference type="PANTHER" id="PTHR11934:SF0">
    <property type="entry name" value="RIBOSE-5-PHOSPHATE ISOMERASE"/>
    <property type="match status" value="1"/>
</dbReference>
<dbReference type="Pfam" id="PF06026">
    <property type="entry name" value="Rib_5-P_isom_A"/>
    <property type="match status" value="1"/>
</dbReference>
<dbReference type="SUPFAM" id="SSF75445">
    <property type="entry name" value="D-ribose-5-phosphate isomerase (RpiA), lid domain"/>
    <property type="match status" value="1"/>
</dbReference>
<dbReference type="SUPFAM" id="SSF100950">
    <property type="entry name" value="NagB/RpiA/CoA transferase-like"/>
    <property type="match status" value="1"/>
</dbReference>
<organism>
    <name type="scientific">Xanthomonas oryzae pv. oryzae (strain PXO99A)</name>
    <dbReference type="NCBI Taxonomy" id="360094"/>
    <lineage>
        <taxon>Bacteria</taxon>
        <taxon>Pseudomonadati</taxon>
        <taxon>Pseudomonadota</taxon>
        <taxon>Gammaproteobacteria</taxon>
        <taxon>Lysobacterales</taxon>
        <taxon>Lysobacteraceae</taxon>
        <taxon>Xanthomonas</taxon>
    </lineage>
</organism>
<gene>
    <name evidence="1" type="primary">rpiA</name>
    <name type="ordered locus">PXO_02384</name>
</gene>
<evidence type="ECO:0000255" key="1">
    <source>
        <dbReference type="HAMAP-Rule" id="MF_00170"/>
    </source>
</evidence>
<name>RPIA_XANOP</name>
<accession>B2SLM6</accession>
<sequence length="215" mass="22943">MSEAKRLAAEKAIDYVEDGMIVGVGTGSTVAYFIDALGHIGHRIKGAVSSSEQSTARLRQHGIEVLDLNHTGNLSLYVDGADECDPNRCLIKGGGAALTREKIIAEASERFICIVDPSKQVPVLGKFPLPVEVIPMARSLVARQILALTGGQPVWRDVVLTDNGNVVLDVHNLQITDPVALERSLNQIPGVVCVGLFARRPADVVIVGGEPPRVL</sequence>
<keyword id="KW-0413">Isomerase</keyword>
<proteinExistence type="inferred from homology"/>
<feature type="chain" id="PRO_1000097706" description="Ribose-5-phosphate isomerase A">
    <location>
        <begin position="1"/>
        <end position="215"/>
    </location>
</feature>
<feature type="active site" description="Proton acceptor" evidence="1">
    <location>
        <position position="101"/>
    </location>
</feature>
<feature type="binding site" evidence="1">
    <location>
        <begin position="26"/>
        <end position="29"/>
    </location>
    <ligand>
        <name>substrate</name>
    </ligand>
</feature>
<feature type="binding site" evidence="1">
    <location>
        <begin position="79"/>
        <end position="82"/>
    </location>
    <ligand>
        <name>substrate</name>
    </ligand>
</feature>
<feature type="binding site" evidence="1">
    <location>
        <begin position="92"/>
        <end position="95"/>
    </location>
    <ligand>
        <name>substrate</name>
    </ligand>
</feature>
<feature type="binding site" evidence="1">
    <location>
        <position position="119"/>
    </location>
    <ligand>
        <name>substrate</name>
    </ligand>
</feature>